<feature type="chain" id="PRO_0000266092" description="CTP synthase">
    <location>
        <begin position="1"/>
        <end position="539"/>
    </location>
</feature>
<feature type="domain" description="Glutamine amidotransferase type-1" evidence="1">
    <location>
        <begin position="294"/>
        <end position="533"/>
    </location>
</feature>
<feature type="region of interest" description="Amidoligase domain" evidence="1">
    <location>
        <begin position="1"/>
        <end position="268"/>
    </location>
</feature>
<feature type="active site" description="Nucleophile; for glutamine hydrolysis" evidence="1">
    <location>
        <position position="380"/>
    </location>
</feature>
<feature type="active site" evidence="1">
    <location>
        <position position="506"/>
    </location>
</feature>
<feature type="active site" evidence="1">
    <location>
        <position position="508"/>
    </location>
</feature>
<feature type="binding site" evidence="1">
    <location>
        <position position="14"/>
    </location>
    <ligand>
        <name>CTP</name>
        <dbReference type="ChEBI" id="CHEBI:37563"/>
        <note>allosteric inhibitor</note>
    </ligand>
</feature>
<feature type="binding site" evidence="1">
    <location>
        <position position="14"/>
    </location>
    <ligand>
        <name>UTP</name>
        <dbReference type="ChEBI" id="CHEBI:46398"/>
    </ligand>
</feature>
<feature type="binding site" evidence="1">
    <location>
        <begin position="15"/>
        <end position="20"/>
    </location>
    <ligand>
        <name>ATP</name>
        <dbReference type="ChEBI" id="CHEBI:30616"/>
    </ligand>
</feature>
<feature type="binding site" evidence="1">
    <location>
        <position position="55"/>
    </location>
    <ligand>
        <name>L-glutamine</name>
        <dbReference type="ChEBI" id="CHEBI:58359"/>
    </ligand>
</feature>
<feature type="binding site" evidence="1">
    <location>
        <position position="72"/>
    </location>
    <ligand>
        <name>ATP</name>
        <dbReference type="ChEBI" id="CHEBI:30616"/>
    </ligand>
</feature>
<feature type="binding site" evidence="1">
    <location>
        <position position="72"/>
    </location>
    <ligand>
        <name>Mg(2+)</name>
        <dbReference type="ChEBI" id="CHEBI:18420"/>
    </ligand>
</feature>
<feature type="binding site" evidence="1">
    <location>
        <position position="142"/>
    </location>
    <ligand>
        <name>Mg(2+)</name>
        <dbReference type="ChEBI" id="CHEBI:18420"/>
    </ligand>
</feature>
<feature type="binding site" evidence="1">
    <location>
        <begin position="149"/>
        <end position="151"/>
    </location>
    <ligand>
        <name>CTP</name>
        <dbReference type="ChEBI" id="CHEBI:37563"/>
        <note>allosteric inhibitor</note>
    </ligand>
</feature>
<feature type="binding site" evidence="1">
    <location>
        <begin position="188"/>
        <end position="193"/>
    </location>
    <ligand>
        <name>CTP</name>
        <dbReference type="ChEBI" id="CHEBI:37563"/>
        <note>allosteric inhibitor</note>
    </ligand>
</feature>
<feature type="binding site" evidence="1">
    <location>
        <begin position="188"/>
        <end position="193"/>
    </location>
    <ligand>
        <name>UTP</name>
        <dbReference type="ChEBI" id="CHEBI:46398"/>
    </ligand>
</feature>
<feature type="binding site" evidence="1">
    <location>
        <position position="224"/>
    </location>
    <ligand>
        <name>CTP</name>
        <dbReference type="ChEBI" id="CHEBI:37563"/>
        <note>allosteric inhibitor</note>
    </ligand>
</feature>
<feature type="binding site" evidence="1">
    <location>
        <position position="224"/>
    </location>
    <ligand>
        <name>UTP</name>
        <dbReference type="ChEBI" id="CHEBI:46398"/>
    </ligand>
</feature>
<feature type="binding site" evidence="1">
    <location>
        <position position="353"/>
    </location>
    <ligand>
        <name>L-glutamine</name>
        <dbReference type="ChEBI" id="CHEBI:58359"/>
    </ligand>
</feature>
<feature type="binding site" evidence="1">
    <location>
        <begin position="381"/>
        <end position="384"/>
    </location>
    <ligand>
        <name>L-glutamine</name>
        <dbReference type="ChEBI" id="CHEBI:58359"/>
    </ligand>
</feature>
<feature type="binding site" evidence="1">
    <location>
        <position position="404"/>
    </location>
    <ligand>
        <name>L-glutamine</name>
        <dbReference type="ChEBI" id="CHEBI:58359"/>
    </ligand>
</feature>
<feature type="binding site" evidence="1">
    <location>
        <position position="461"/>
    </location>
    <ligand>
        <name>L-glutamine</name>
        <dbReference type="ChEBI" id="CHEBI:58359"/>
    </ligand>
</feature>
<dbReference type="EC" id="6.3.4.2" evidence="1"/>
<dbReference type="EMBL" id="AP006861">
    <property type="protein sequence ID" value="BAE81179.1"/>
    <property type="molecule type" value="Genomic_DNA"/>
</dbReference>
<dbReference type="RefSeq" id="WP_011457959.1">
    <property type="nucleotide sequence ID" value="NC_007899.1"/>
</dbReference>
<dbReference type="SMR" id="Q254V9"/>
<dbReference type="STRING" id="264202.CF0407"/>
<dbReference type="MEROPS" id="C26.964"/>
<dbReference type="KEGG" id="cfe:CF0407"/>
<dbReference type="eggNOG" id="COG0504">
    <property type="taxonomic scope" value="Bacteria"/>
</dbReference>
<dbReference type="HOGENOM" id="CLU_011675_5_0_0"/>
<dbReference type="OrthoDB" id="9801107at2"/>
<dbReference type="UniPathway" id="UPA00159">
    <property type="reaction ID" value="UER00277"/>
</dbReference>
<dbReference type="Proteomes" id="UP000001260">
    <property type="component" value="Chromosome"/>
</dbReference>
<dbReference type="GO" id="GO:0005829">
    <property type="term" value="C:cytosol"/>
    <property type="evidence" value="ECO:0007669"/>
    <property type="project" value="TreeGrafter"/>
</dbReference>
<dbReference type="GO" id="GO:0005524">
    <property type="term" value="F:ATP binding"/>
    <property type="evidence" value="ECO:0007669"/>
    <property type="project" value="UniProtKB-KW"/>
</dbReference>
<dbReference type="GO" id="GO:0003883">
    <property type="term" value="F:CTP synthase activity"/>
    <property type="evidence" value="ECO:0007669"/>
    <property type="project" value="UniProtKB-UniRule"/>
</dbReference>
<dbReference type="GO" id="GO:0004359">
    <property type="term" value="F:glutaminase activity"/>
    <property type="evidence" value="ECO:0007669"/>
    <property type="project" value="RHEA"/>
</dbReference>
<dbReference type="GO" id="GO:0042802">
    <property type="term" value="F:identical protein binding"/>
    <property type="evidence" value="ECO:0007669"/>
    <property type="project" value="TreeGrafter"/>
</dbReference>
<dbReference type="GO" id="GO:0046872">
    <property type="term" value="F:metal ion binding"/>
    <property type="evidence" value="ECO:0007669"/>
    <property type="project" value="UniProtKB-KW"/>
</dbReference>
<dbReference type="GO" id="GO:0044210">
    <property type="term" value="P:'de novo' CTP biosynthetic process"/>
    <property type="evidence" value="ECO:0007669"/>
    <property type="project" value="UniProtKB-UniRule"/>
</dbReference>
<dbReference type="GO" id="GO:0019856">
    <property type="term" value="P:pyrimidine nucleobase biosynthetic process"/>
    <property type="evidence" value="ECO:0007669"/>
    <property type="project" value="TreeGrafter"/>
</dbReference>
<dbReference type="CDD" id="cd03113">
    <property type="entry name" value="CTPS_N"/>
    <property type="match status" value="1"/>
</dbReference>
<dbReference type="CDD" id="cd01746">
    <property type="entry name" value="GATase1_CTP_Synthase"/>
    <property type="match status" value="1"/>
</dbReference>
<dbReference type="FunFam" id="3.40.50.300:FF:000009">
    <property type="entry name" value="CTP synthase"/>
    <property type="match status" value="1"/>
</dbReference>
<dbReference type="FunFam" id="3.40.50.880:FF:000002">
    <property type="entry name" value="CTP synthase"/>
    <property type="match status" value="1"/>
</dbReference>
<dbReference type="Gene3D" id="3.40.50.880">
    <property type="match status" value="1"/>
</dbReference>
<dbReference type="Gene3D" id="3.40.50.300">
    <property type="entry name" value="P-loop containing nucleotide triphosphate hydrolases"/>
    <property type="match status" value="1"/>
</dbReference>
<dbReference type="HAMAP" id="MF_01227">
    <property type="entry name" value="PyrG"/>
    <property type="match status" value="1"/>
</dbReference>
<dbReference type="InterPro" id="IPR029062">
    <property type="entry name" value="Class_I_gatase-like"/>
</dbReference>
<dbReference type="InterPro" id="IPR004468">
    <property type="entry name" value="CTP_synthase"/>
</dbReference>
<dbReference type="InterPro" id="IPR017456">
    <property type="entry name" value="CTP_synthase_N"/>
</dbReference>
<dbReference type="InterPro" id="IPR017926">
    <property type="entry name" value="GATASE"/>
</dbReference>
<dbReference type="InterPro" id="IPR033828">
    <property type="entry name" value="GATase1_CTP_Synthase"/>
</dbReference>
<dbReference type="InterPro" id="IPR027417">
    <property type="entry name" value="P-loop_NTPase"/>
</dbReference>
<dbReference type="NCBIfam" id="NF003792">
    <property type="entry name" value="PRK05380.1"/>
    <property type="match status" value="1"/>
</dbReference>
<dbReference type="NCBIfam" id="TIGR00337">
    <property type="entry name" value="PyrG"/>
    <property type="match status" value="1"/>
</dbReference>
<dbReference type="PANTHER" id="PTHR11550">
    <property type="entry name" value="CTP SYNTHASE"/>
    <property type="match status" value="1"/>
</dbReference>
<dbReference type="PANTHER" id="PTHR11550:SF0">
    <property type="entry name" value="CTP SYNTHASE-RELATED"/>
    <property type="match status" value="1"/>
</dbReference>
<dbReference type="Pfam" id="PF06418">
    <property type="entry name" value="CTP_synth_N"/>
    <property type="match status" value="1"/>
</dbReference>
<dbReference type="Pfam" id="PF00117">
    <property type="entry name" value="GATase"/>
    <property type="match status" value="1"/>
</dbReference>
<dbReference type="SUPFAM" id="SSF52317">
    <property type="entry name" value="Class I glutamine amidotransferase-like"/>
    <property type="match status" value="1"/>
</dbReference>
<dbReference type="SUPFAM" id="SSF52540">
    <property type="entry name" value="P-loop containing nucleoside triphosphate hydrolases"/>
    <property type="match status" value="1"/>
</dbReference>
<dbReference type="PROSITE" id="PS51273">
    <property type="entry name" value="GATASE_TYPE_1"/>
    <property type="match status" value="1"/>
</dbReference>
<keyword id="KW-0067">ATP-binding</keyword>
<keyword id="KW-0315">Glutamine amidotransferase</keyword>
<keyword id="KW-0436">Ligase</keyword>
<keyword id="KW-0460">Magnesium</keyword>
<keyword id="KW-0479">Metal-binding</keyword>
<keyword id="KW-0547">Nucleotide-binding</keyword>
<keyword id="KW-0665">Pyrimidine biosynthesis</keyword>
<protein>
    <recommendedName>
        <fullName evidence="1">CTP synthase</fullName>
        <ecNumber evidence="1">6.3.4.2</ecNumber>
    </recommendedName>
    <alternativeName>
        <fullName evidence="1">Cytidine 5'-triphosphate synthase</fullName>
    </alternativeName>
    <alternativeName>
        <fullName evidence="1">Cytidine triphosphate synthetase</fullName>
        <shortName evidence="1">CTP synthetase</shortName>
        <shortName evidence="1">CTPS</shortName>
    </alternativeName>
    <alternativeName>
        <fullName evidence="1">UTP--ammonia ligase</fullName>
    </alternativeName>
</protein>
<evidence type="ECO:0000255" key="1">
    <source>
        <dbReference type="HAMAP-Rule" id="MF_01227"/>
    </source>
</evidence>
<gene>
    <name evidence="1" type="primary">pyrG</name>
    <name type="ordered locus">CF0407</name>
</gene>
<proteinExistence type="inferred from homology"/>
<name>PYRG_CHLFF</name>
<organism>
    <name type="scientific">Chlamydia felis (strain Fe/C-56)</name>
    <name type="common">Chlamydophila felis</name>
    <dbReference type="NCBI Taxonomy" id="264202"/>
    <lineage>
        <taxon>Bacteria</taxon>
        <taxon>Pseudomonadati</taxon>
        <taxon>Chlamydiota</taxon>
        <taxon>Chlamydiia</taxon>
        <taxon>Chlamydiales</taxon>
        <taxon>Chlamydiaceae</taxon>
        <taxon>Chlamydia/Chlamydophila group</taxon>
        <taxon>Chlamydia</taxon>
    </lineage>
</organism>
<sequence>MSFKCIFLTGGVVSSLGKGLTAASLALLLERQSLKVSMLKLDPYLNVDPGTMNPYEHGEVYVTNDGIETDLDLGHYHRFSSVKLSKYSTATSGQIYARVIKKEREGVYLGSTVQVIPHITNEIIEVILECARENQPDVLIVEIGGTVGDIESLPFLEAIRQFRYEHAENCFSIHMTYVPYLKAAGEVKTKPTQHSVQSLRSIGIIPDAILCRSESSLSPDVKKKISLFCNVPNNAVFNVVDIEHSIYEMPLMLSQENISTFITEKLGLFTKQEDLSDWKTLVERLRNPSLDKVRIGLVGKYVQHKDAYKSVFEALTHAALSLNSSVEILPLDSEDPHFLETLEQCDGCLVPGGFGSRGWEGKITAAKLCRERGIPYFGICLGMQVLVVEYARNVLRLEKANSTEMDAETPDPVICMMDGQASLVATGGTMRLGAYPCLISPGTKVHEAYGESEVMERHRHRYEVNFDYVQQFKDFGLNVVGTCPQQGLCEIVEIENHPWMIGVQFHPEFLSKLIAPHPLFVGFIQAAILYSRNKSYVQA</sequence>
<accession>Q254V9</accession>
<comment type="function">
    <text evidence="1">Catalyzes the ATP-dependent amination of UTP to CTP with either L-glutamine or ammonia as the source of nitrogen. Regulates intracellular CTP levels through interactions with the four ribonucleotide triphosphates.</text>
</comment>
<comment type="catalytic activity">
    <reaction evidence="1">
        <text>UTP + L-glutamine + ATP + H2O = CTP + L-glutamate + ADP + phosphate + 2 H(+)</text>
        <dbReference type="Rhea" id="RHEA:26426"/>
        <dbReference type="ChEBI" id="CHEBI:15377"/>
        <dbReference type="ChEBI" id="CHEBI:15378"/>
        <dbReference type="ChEBI" id="CHEBI:29985"/>
        <dbReference type="ChEBI" id="CHEBI:30616"/>
        <dbReference type="ChEBI" id="CHEBI:37563"/>
        <dbReference type="ChEBI" id="CHEBI:43474"/>
        <dbReference type="ChEBI" id="CHEBI:46398"/>
        <dbReference type="ChEBI" id="CHEBI:58359"/>
        <dbReference type="ChEBI" id="CHEBI:456216"/>
        <dbReference type="EC" id="6.3.4.2"/>
    </reaction>
</comment>
<comment type="catalytic activity">
    <reaction evidence="1">
        <text>L-glutamine + H2O = L-glutamate + NH4(+)</text>
        <dbReference type="Rhea" id="RHEA:15889"/>
        <dbReference type="ChEBI" id="CHEBI:15377"/>
        <dbReference type="ChEBI" id="CHEBI:28938"/>
        <dbReference type="ChEBI" id="CHEBI:29985"/>
        <dbReference type="ChEBI" id="CHEBI:58359"/>
    </reaction>
</comment>
<comment type="catalytic activity">
    <reaction evidence="1">
        <text>UTP + NH4(+) + ATP = CTP + ADP + phosphate + 2 H(+)</text>
        <dbReference type="Rhea" id="RHEA:16597"/>
        <dbReference type="ChEBI" id="CHEBI:15378"/>
        <dbReference type="ChEBI" id="CHEBI:28938"/>
        <dbReference type="ChEBI" id="CHEBI:30616"/>
        <dbReference type="ChEBI" id="CHEBI:37563"/>
        <dbReference type="ChEBI" id="CHEBI:43474"/>
        <dbReference type="ChEBI" id="CHEBI:46398"/>
        <dbReference type="ChEBI" id="CHEBI:456216"/>
    </reaction>
</comment>
<comment type="activity regulation">
    <text evidence="1">Allosterically activated by GTP, when glutamine is the substrate; GTP has no effect on the reaction when ammonia is the substrate. The allosteric effector GTP functions by stabilizing the protein conformation that binds the tetrahedral intermediate(s) formed during glutamine hydrolysis. Inhibited by the product CTP, via allosteric rather than competitive inhibition.</text>
</comment>
<comment type="pathway">
    <text evidence="1">Pyrimidine metabolism; CTP biosynthesis via de novo pathway; CTP from UDP: step 2/2.</text>
</comment>
<comment type="subunit">
    <text evidence="1">Homotetramer.</text>
</comment>
<comment type="miscellaneous">
    <text evidence="1">CTPSs have evolved a hybrid strategy for distinguishing between UTP and CTP. The overlapping regions of the product feedback inhibitory and substrate sites recognize a common feature in both compounds, the triphosphate moiety. To differentiate isosteric substrate and product pyrimidine rings, an additional pocket far from the expected kinase/ligase catalytic site, specifically recognizes the cytosine and ribose portions of the product inhibitor.</text>
</comment>
<comment type="similarity">
    <text evidence="1">Belongs to the CTP synthase family.</text>
</comment>
<reference key="1">
    <citation type="journal article" date="2006" name="DNA Res.">
        <title>Genome sequence of the cat pathogen, Chlamydophila felis.</title>
        <authorList>
            <person name="Azuma Y."/>
            <person name="Hirakawa H."/>
            <person name="Yamashita A."/>
            <person name="Cai Y."/>
            <person name="Rahman M.A."/>
            <person name="Suzuki H."/>
            <person name="Mitaku S."/>
            <person name="Toh H."/>
            <person name="Goto S."/>
            <person name="Murakami T."/>
            <person name="Sugi K."/>
            <person name="Hayashi H."/>
            <person name="Fukushi H."/>
            <person name="Hattori M."/>
            <person name="Kuhara S."/>
            <person name="Shirai M."/>
        </authorList>
    </citation>
    <scope>NUCLEOTIDE SEQUENCE [LARGE SCALE GENOMIC DNA]</scope>
    <source>
        <strain>Fe/C-56</strain>
    </source>
</reference>